<protein>
    <recommendedName>
        <fullName>Uncharacterized protein Rv0875c</fullName>
    </recommendedName>
</protein>
<proteinExistence type="evidence at protein level"/>
<name>Y875_MYCTU</name>
<evidence type="ECO:0000255" key="1"/>
<organism>
    <name type="scientific">Mycobacterium tuberculosis (strain ATCC 25618 / H37Rv)</name>
    <dbReference type="NCBI Taxonomy" id="83332"/>
    <lineage>
        <taxon>Bacteria</taxon>
        <taxon>Bacillati</taxon>
        <taxon>Actinomycetota</taxon>
        <taxon>Actinomycetes</taxon>
        <taxon>Mycobacteriales</taxon>
        <taxon>Mycobacteriaceae</taxon>
        <taxon>Mycobacterium</taxon>
        <taxon>Mycobacterium tuberculosis complex</taxon>
    </lineage>
</organism>
<reference key="1">
    <citation type="journal article" date="1998" name="Nature">
        <title>Deciphering the biology of Mycobacterium tuberculosis from the complete genome sequence.</title>
        <authorList>
            <person name="Cole S.T."/>
            <person name="Brosch R."/>
            <person name="Parkhill J."/>
            <person name="Garnier T."/>
            <person name="Churcher C.M."/>
            <person name="Harris D.E."/>
            <person name="Gordon S.V."/>
            <person name="Eiglmeier K."/>
            <person name="Gas S."/>
            <person name="Barry C.E. III"/>
            <person name="Tekaia F."/>
            <person name="Badcock K."/>
            <person name="Basham D."/>
            <person name="Brown D."/>
            <person name="Chillingworth T."/>
            <person name="Connor R."/>
            <person name="Davies R.M."/>
            <person name="Devlin K."/>
            <person name="Feltwell T."/>
            <person name="Gentles S."/>
            <person name="Hamlin N."/>
            <person name="Holroyd S."/>
            <person name="Hornsby T."/>
            <person name="Jagels K."/>
            <person name="Krogh A."/>
            <person name="McLean J."/>
            <person name="Moule S."/>
            <person name="Murphy L.D."/>
            <person name="Oliver S."/>
            <person name="Osborne J."/>
            <person name="Quail M.A."/>
            <person name="Rajandream M.A."/>
            <person name="Rogers J."/>
            <person name="Rutter S."/>
            <person name="Seeger K."/>
            <person name="Skelton S."/>
            <person name="Squares S."/>
            <person name="Squares R."/>
            <person name="Sulston J.E."/>
            <person name="Taylor K."/>
            <person name="Whitehead S."/>
            <person name="Barrell B.G."/>
        </authorList>
    </citation>
    <scope>NUCLEOTIDE SEQUENCE [LARGE SCALE GENOMIC DNA]</scope>
    <source>
        <strain>ATCC 25618 / H37Rv</strain>
    </source>
</reference>
<reference key="2">
    <citation type="journal article" date="2011" name="Mol. Cell. Proteomics">
        <title>Proteogenomic analysis of Mycobacterium tuberculosis by high resolution mass spectrometry.</title>
        <authorList>
            <person name="Kelkar D.S."/>
            <person name="Kumar D."/>
            <person name="Kumar P."/>
            <person name="Balakrishnan L."/>
            <person name="Muthusamy B."/>
            <person name="Yadav A.K."/>
            <person name="Shrivastava P."/>
            <person name="Marimuthu A."/>
            <person name="Anand S."/>
            <person name="Sundaram H."/>
            <person name="Kingsbury R."/>
            <person name="Harsha H.C."/>
            <person name="Nair B."/>
            <person name="Prasad T.S."/>
            <person name="Chauhan D.S."/>
            <person name="Katoch K."/>
            <person name="Katoch V.M."/>
            <person name="Kumar P."/>
            <person name="Chaerkady R."/>
            <person name="Ramachandran S."/>
            <person name="Dash D."/>
            <person name="Pandey A."/>
        </authorList>
    </citation>
    <scope>IDENTIFICATION BY MASS SPECTROMETRY [LARGE SCALE ANALYSIS]</scope>
    <source>
        <strain>ATCC 25618 / H37Rv</strain>
    </source>
</reference>
<gene>
    <name type="ordered locus">Rv0875c</name>
    <name type="ORF">MTCY31.03c</name>
</gene>
<sequence>MKRGVATLPVILVILLSVAAGAGAWLLVRGHGPQQPEISAYSHGHLTRVGPYLYCNVVDLDDCQTPQAQGELPVSERYPVQLSVPEVISRAPWRLLQVYQDPANTTSTLFRPDTRLAVTIPTVDPQRGRLTGIVVQLLTLVVDHSGELRDVPHAEWSVRLIF</sequence>
<keyword id="KW-1185">Reference proteome</keyword>
<keyword id="KW-0732">Signal</keyword>
<feature type="signal peptide" evidence="1">
    <location>
        <begin position="1"/>
        <end position="24"/>
    </location>
</feature>
<feature type="chain" id="PRO_0000014079" description="Uncharacterized protein Rv0875c">
    <location>
        <begin position="25"/>
        <end position="162"/>
    </location>
</feature>
<accession>P9WKR7</accession>
<accession>L0T7S3</accession>
<accession>P64731</accession>
<accession>Q10537</accession>
<dbReference type="EMBL" id="AL123456">
    <property type="protein sequence ID" value="CCP43623.1"/>
    <property type="molecule type" value="Genomic_DNA"/>
</dbReference>
<dbReference type="PIR" id="H70779">
    <property type="entry name" value="H70779"/>
</dbReference>
<dbReference type="RefSeq" id="NP_215390.1">
    <property type="nucleotide sequence ID" value="NC_000962.3"/>
</dbReference>
<dbReference type="RefSeq" id="WP_003404591.1">
    <property type="nucleotide sequence ID" value="NZ_NVQJ01000001.1"/>
</dbReference>
<dbReference type="STRING" id="83332.Rv0875c"/>
<dbReference type="PaxDb" id="83332-Rv0875c"/>
<dbReference type="DNASU" id="885669"/>
<dbReference type="GeneID" id="885669"/>
<dbReference type="KEGG" id="mtu:Rv0875c"/>
<dbReference type="KEGG" id="mtv:RVBD_0875c"/>
<dbReference type="TubercuList" id="Rv0875c"/>
<dbReference type="eggNOG" id="ENOG5033EZJ">
    <property type="taxonomic scope" value="Bacteria"/>
</dbReference>
<dbReference type="InParanoid" id="P9WKR7"/>
<dbReference type="OrthoDB" id="4772953at2"/>
<dbReference type="Proteomes" id="UP000001584">
    <property type="component" value="Chromosome"/>
</dbReference>
<dbReference type="GO" id="GO:0005886">
    <property type="term" value="C:plasma membrane"/>
    <property type="evidence" value="ECO:0007005"/>
    <property type="project" value="MTBBASE"/>
</dbReference>
<dbReference type="InterPro" id="IPR024495">
    <property type="entry name" value="DUF2771"/>
</dbReference>
<dbReference type="Pfam" id="PF10969">
    <property type="entry name" value="DUF2771"/>
    <property type="match status" value="1"/>
</dbReference>